<name>VANRC_ENTGA</name>
<keyword id="KW-0010">Activator</keyword>
<keyword id="KW-0046">Antibiotic resistance</keyword>
<keyword id="KW-0961">Cell wall biogenesis/degradation</keyword>
<keyword id="KW-0963">Cytoplasm</keyword>
<keyword id="KW-0238">DNA-binding</keyword>
<keyword id="KW-0597">Phosphoprotein</keyword>
<keyword id="KW-0678">Repressor</keyword>
<keyword id="KW-0804">Transcription</keyword>
<keyword id="KW-0805">Transcription regulation</keyword>
<keyword id="KW-0902">Two-component regulatory system</keyword>
<proteinExistence type="evidence at transcript level"/>
<evidence type="ECO:0000250" key="1">
    <source>
        <dbReference type="UniProtKB" id="Q06239"/>
    </source>
</evidence>
<evidence type="ECO:0000255" key="2">
    <source>
        <dbReference type="PROSITE-ProRule" id="PRU00169"/>
    </source>
</evidence>
<evidence type="ECO:0000255" key="3">
    <source>
        <dbReference type="PROSITE-ProRule" id="PRU01091"/>
    </source>
</evidence>
<evidence type="ECO:0000269" key="4">
    <source>
    </source>
</evidence>
<evidence type="ECO:0000269" key="5">
    <source>
    </source>
</evidence>
<evidence type="ECO:0000303" key="6">
    <source>
    </source>
</evidence>
<evidence type="ECO:0000305" key="7"/>
<evidence type="ECO:0000312" key="8">
    <source>
        <dbReference type="EMBL" id="AAF86641.1"/>
    </source>
</evidence>
<evidence type="ECO:0000312" key="9">
    <source>
        <dbReference type="EMBL" id="AAY67971.1"/>
    </source>
</evidence>
<evidence type="ECO:0000312" key="10">
    <source>
        <dbReference type="EMBL" id="MDT2689682.1"/>
    </source>
</evidence>
<evidence type="ECO:0000312" key="11">
    <source>
        <dbReference type="EMBL" id="MXS24890.1"/>
    </source>
</evidence>
<evidence type="ECO:0000312" key="12">
    <source>
        <dbReference type="EMBL" id="NYS81412.1"/>
    </source>
</evidence>
<evidence type="ECO:0000312" key="13">
    <source>
        <dbReference type="EMBL" id="QOG26923.1"/>
    </source>
</evidence>
<evidence type="ECO:0000312" key="14">
    <source>
        <dbReference type="Proteomes" id="UP000439965"/>
    </source>
</evidence>
<evidence type="ECO:0000312" key="15">
    <source>
        <dbReference type="Proteomes" id="UP000516696"/>
    </source>
</evidence>
<feature type="chain" id="PRO_0000461961" description="Regulatory protein VanRc" evidence="7">
    <location>
        <begin position="1"/>
        <end position="231"/>
    </location>
</feature>
<feature type="domain" description="Response regulatory" evidence="2">
    <location>
        <begin position="4"/>
        <end position="117"/>
    </location>
</feature>
<feature type="DNA-binding region" description="OmpR/PhoB-type" evidence="3">
    <location>
        <begin position="132"/>
        <end position="231"/>
    </location>
</feature>
<feature type="modified residue" description="4-aspartylphosphate" evidence="2">
    <location>
        <position position="53"/>
    </location>
</feature>
<reference evidence="8" key="1">
    <citation type="journal article" date="2000" name="Antimicrob. Agents Chemother.">
        <title>vanC cluster of vancomycin-resistant Enterococcus gallinarum BM4174.</title>
        <authorList>
            <person name="Arias C.A."/>
            <person name="Courvalin P."/>
            <person name="Reynolds P.E."/>
        </authorList>
    </citation>
    <scope>NUCLEOTIDE SEQUENCE [GENOMIC DNA]</scope>
    <scope>INDUCTION</scope>
    <source>
        <strain evidence="8">BM4174</strain>
    </source>
</reference>
<reference evidence="9" key="2">
    <citation type="journal article" date="2006" name="Antimicrob. Agents Chemother.">
        <title>Enterococcus gallinarum N04-0414 harbors a VanD-type vancomycin resistance operon and does not contain a D-alanine:D-alanine 2 (ddl2) gene.</title>
        <authorList>
            <person name="Boyd D.A."/>
            <person name="Miller M.A."/>
            <person name="Mulvey M.R."/>
        </authorList>
    </citation>
    <scope>NUCLEOTIDE SEQUENCE [GENOMIC DNA]</scope>
    <source>
        <strain evidence="9">N04-0414</strain>
    </source>
</reference>
<reference evidence="11 14" key="3">
    <citation type="submission" date="2019-04" db="EMBL/GenBank/DDBJ databases">
        <title>Step-wise assembly of the neonatal virome modulated by breast feeding.</title>
        <authorList>
            <person name="Liang G."/>
            <person name="Bushman F."/>
        </authorList>
    </citation>
    <scope>NUCLEOTIDE SEQUENCE [LARGE SCALE GENOMIC DNA]</scope>
    <source>
        <strain evidence="11 14">E3404</strain>
    </source>
</reference>
<reference evidence="13 15" key="4">
    <citation type="submission" date="2020-03" db="EMBL/GenBank/DDBJ databases">
        <title>Characterization of ganglioside-mimicking enterococci.</title>
        <authorList>
            <person name="Patry R.T."/>
            <person name="Nothaft H."/>
            <person name="Bridger R."/>
            <person name="Shajahan A."/>
            <person name="Huynh S."/>
            <person name="Sanchez S."/>
            <person name="Azadi P."/>
            <person name="Cooper K."/>
            <person name="Miller W.G."/>
            <person name="Parker C.T."/>
            <person name="Wells L."/>
            <person name="Szymanski C.M."/>
        </authorList>
    </citation>
    <scope>NUCLEOTIDE SEQUENCE [LARGE SCALE GENOMIC DNA]</scope>
    <source>
        <strain evidence="13 15">EGM181</strain>
    </source>
</reference>
<reference evidence="12" key="5">
    <citation type="submission" date="2020-07" db="EMBL/GenBank/DDBJ databases">
        <title>MOT database genomes.</title>
        <authorList>
            <person name="Joseph S."/>
            <person name="Aduse-Opoku J."/>
            <person name="Hashim A."/>
            <person name="Wade W."/>
            <person name="Curtis M."/>
        </authorList>
    </citation>
    <scope>NUCLEOTIDE SEQUENCE [LARGE SCALE GENOMIC DNA]</scope>
    <source>
        <strain>ENT</strain>
    </source>
</reference>
<reference evidence="10" key="6">
    <citation type="submission" date="2023-03" db="EMBL/GenBank/DDBJ databases">
        <authorList>
            <person name="Shen W."/>
            <person name="Cai J."/>
        </authorList>
    </citation>
    <scope>NUCLEOTIDE SEQUENCE [LARGE SCALE GENOMIC DNA]</scope>
    <source>
        <strain>K69-2</strain>
    </source>
</reference>
<reference evidence="7" key="7">
    <citation type="journal article" date="2005" name="Antimicrob. Agents Chemother.">
        <title>Transcriptional analysis of the vanC cluster from Enterococcus gallinarum strains with constitutive and inducible vancomycin resistance.</title>
        <authorList>
            <person name="Panesso D."/>
            <person name="Abadia-Patino L."/>
            <person name="Vanegas N."/>
            <person name="Reynolds P.E."/>
            <person name="Courvalin P."/>
            <person name="Arias C.A."/>
        </authorList>
    </citation>
    <scope>INDUCTION</scope>
</reference>
<dbReference type="EMBL" id="AF162694">
    <property type="protein sequence ID" value="AAF86641.1"/>
    <property type="molecule type" value="Genomic_DNA"/>
</dbReference>
<dbReference type="EMBL" id="DQ022190">
    <property type="protein sequence ID" value="AAY67971.1"/>
    <property type="molecule type" value="Genomic_DNA"/>
</dbReference>
<dbReference type="EMBL" id="JARPZN010000002">
    <property type="protein sequence ID" value="MDT2689682.1"/>
    <property type="molecule type" value="Genomic_DNA"/>
</dbReference>
<dbReference type="EMBL" id="WVTI01000001">
    <property type="protein sequence ID" value="MXS24890.1"/>
    <property type="molecule type" value="Genomic_DNA"/>
</dbReference>
<dbReference type="EMBL" id="JACBYD010000038">
    <property type="protein sequence ID" value="NYS81412.1"/>
    <property type="molecule type" value="Genomic_DNA"/>
</dbReference>
<dbReference type="EMBL" id="CP050485">
    <property type="protein sequence ID" value="QOG26923.1"/>
    <property type="molecule type" value="Genomic_DNA"/>
</dbReference>
<dbReference type="PATRIC" id="fig|1353.6.peg.66"/>
<dbReference type="Proteomes" id="UP000439965">
    <property type="component" value="Unassembled WGS sequence"/>
</dbReference>
<dbReference type="Proteomes" id="UP000516696">
    <property type="component" value="Chromosome"/>
</dbReference>
<dbReference type="Proteomes" id="UP001183682">
    <property type="component" value="Unassembled WGS sequence"/>
</dbReference>
<dbReference type="GO" id="GO:0005829">
    <property type="term" value="C:cytosol"/>
    <property type="evidence" value="ECO:0007669"/>
    <property type="project" value="TreeGrafter"/>
</dbReference>
<dbReference type="GO" id="GO:0032993">
    <property type="term" value="C:protein-DNA complex"/>
    <property type="evidence" value="ECO:0007669"/>
    <property type="project" value="TreeGrafter"/>
</dbReference>
<dbReference type="GO" id="GO:0000156">
    <property type="term" value="F:phosphorelay response regulator activity"/>
    <property type="evidence" value="ECO:0007669"/>
    <property type="project" value="TreeGrafter"/>
</dbReference>
<dbReference type="GO" id="GO:0000976">
    <property type="term" value="F:transcription cis-regulatory region binding"/>
    <property type="evidence" value="ECO:0007669"/>
    <property type="project" value="TreeGrafter"/>
</dbReference>
<dbReference type="GO" id="GO:0006355">
    <property type="term" value="P:regulation of DNA-templated transcription"/>
    <property type="evidence" value="ECO:0007669"/>
    <property type="project" value="InterPro"/>
</dbReference>
<dbReference type="CDD" id="cd00383">
    <property type="entry name" value="trans_reg_C"/>
    <property type="match status" value="1"/>
</dbReference>
<dbReference type="FunFam" id="3.40.50.2300:FF:000001">
    <property type="entry name" value="DNA-binding response regulator PhoB"/>
    <property type="match status" value="1"/>
</dbReference>
<dbReference type="FunFam" id="1.10.10.10:FF:000018">
    <property type="entry name" value="DNA-binding response regulator ResD"/>
    <property type="match status" value="1"/>
</dbReference>
<dbReference type="Gene3D" id="3.40.50.2300">
    <property type="match status" value="1"/>
</dbReference>
<dbReference type="Gene3D" id="6.10.250.690">
    <property type="match status" value="1"/>
</dbReference>
<dbReference type="Gene3D" id="1.10.10.10">
    <property type="entry name" value="Winged helix-like DNA-binding domain superfamily/Winged helix DNA-binding domain"/>
    <property type="match status" value="1"/>
</dbReference>
<dbReference type="InterPro" id="IPR011006">
    <property type="entry name" value="CheY-like_superfamily"/>
</dbReference>
<dbReference type="InterPro" id="IPR001867">
    <property type="entry name" value="OmpR/PhoB-type_DNA-bd"/>
</dbReference>
<dbReference type="InterPro" id="IPR016032">
    <property type="entry name" value="Sig_transdc_resp-reg_C-effctor"/>
</dbReference>
<dbReference type="InterPro" id="IPR001789">
    <property type="entry name" value="Sig_transdc_resp-reg_receiver"/>
</dbReference>
<dbReference type="InterPro" id="IPR039420">
    <property type="entry name" value="WalR-like"/>
</dbReference>
<dbReference type="InterPro" id="IPR036388">
    <property type="entry name" value="WH-like_DNA-bd_sf"/>
</dbReference>
<dbReference type="NCBIfam" id="NF000403">
    <property type="entry name" value="vanR-C"/>
    <property type="match status" value="1"/>
</dbReference>
<dbReference type="NCBIfam" id="NF033117">
    <property type="entry name" value="vanR_ACDEGLN"/>
    <property type="match status" value="1"/>
</dbReference>
<dbReference type="PANTHER" id="PTHR48111">
    <property type="entry name" value="REGULATOR OF RPOS"/>
    <property type="match status" value="1"/>
</dbReference>
<dbReference type="PANTHER" id="PTHR48111:SF2">
    <property type="entry name" value="RESPONSE REGULATOR SAER"/>
    <property type="match status" value="1"/>
</dbReference>
<dbReference type="Pfam" id="PF00072">
    <property type="entry name" value="Response_reg"/>
    <property type="match status" value="1"/>
</dbReference>
<dbReference type="Pfam" id="PF00486">
    <property type="entry name" value="Trans_reg_C"/>
    <property type="match status" value="1"/>
</dbReference>
<dbReference type="SMART" id="SM00448">
    <property type="entry name" value="REC"/>
    <property type="match status" value="1"/>
</dbReference>
<dbReference type="SMART" id="SM00862">
    <property type="entry name" value="Trans_reg_C"/>
    <property type="match status" value="1"/>
</dbReference>
<dbReference type="SUPFAM" id="SSF46894">
    <property type="entry name" value="C-terminal effector domain of the bipartite response regulators"/>
    <property type="match status" value="1"/>
</dbReference>
<dbReference type="SUPFAM" id="SSF52172">
    <property type="entry name" value="CheY-like"/>
    <property type="match status" value="1"/>
</dbReference>
<dbReference type="PROSITE" id="PS51755">
    <property type="entry name" value="OMPR_PHOB"/>
    <property type="match status" value="1"/>
</dbReference>
<dbReference type="PROSITE" id="PS50110">
    <property type="entry name" value="RESPONSE_REGULATORY"/>
    <property type="match status" value="1"/>
</dbReference>
<protein>
    <recommendedName>
        <fullName evidence="6">Regulatory protein VanRc</fullName>
    </recommendedName>
    <alternativeName>
        <fullName evidence="9">Response regulator</fullName>
    </alternativeName>
    <alternativeName>
        <fullName evidence="8">Response regulator VanRc</fullName>
    </alternativeName>
    <alternativeName>
        <fullName evidence="11">VanC-type vancomycin resistance DNA-binding response regulator VanRc</fullName>
    </alternativeName>
</protein>
<accession>Q9KJT4</accession>
<comment type="function">
    <text evidence="1">Member of the two-component regulatory system VanSc/VanRc (By similarity). Binds to the promoter regions of target genes (By similarity). Activates the transcription of vanC1 and vanXYC in response to vancomycin which results in vancomycin resistance (By similarity).</text>
</comment>
<comment type="subcellular location">
    <subcellularLocation>
        <location evidence="1">Cytoplasm</location>
    </subcellularLocation>
</comment>
<comment type="induction">
    <text evidence="4 5">Expression regulated by upstream promoter elements (PubMed:10817725, PubMed:15728903). Part of the probable VanC-type operon associated with vancomycin resistance (PubMed:10817725, PubMed:15728903).</text>
</comment>
<comment type="PTM">
    <text evidence="1">Phosphorylated by VanSc.</text>
</comment>
<sequence>MSEKIVVVDDEKEIADLVTTFLQNEGFSVQPFYDGTSAIAYIEKEAIDLAVLDVMLPDIDGFQLLQQIRKTHFFPVLMLTAKGEDLDKITGLSLGADDYVTKPFNPLEVVARVKTQLRRYQRYNHSTASPTVEEYEKDGLILKINSHQCILYGKEVFLTPIEFKILLYLFEHQGSVVSSETLFEAVWKEKYLDNNNTVMAHIARLREKLHEEPRKPKLIKTVWGVGYIIEK</sequence>
<gene>
    <name evidence="6 8" type="primary">vanRc</name>
    <name evidence="11" type="synonym">vanR</name>
    <name evidence="13" type="ORF">EGM181_06545</name>
    <name evidence="11" type="ORF">GTI89_02125</name>
    <name evidence="12" type="ORF">HZY99_04435</name>
    <name evidence="10" type="ORF">P7E30_05565</name>
</gene>
<organism evidence="8">
    <name type="scientific">Enterococcus gallinarum</name>
    <dbReference type="NCBI Taxonomy" id="1353"/>
    <lineage>
        <taxon>Bacteria</taxon>
        <taxon>Bacillati</taxon>
        <taxon>Bacillota</taxon>
        <taxon>Bacilli</taxon>
        <taxon>Lactobacillales</taxon>
        <taxon>Enterococcaceae</taxon>
        <taxon>Enterococcus</taxon>
    </lineage>
</organism>